<proteinExistence type="inferred from homology"/>
<gene>
    <name evidence="1" type="primary">menD</name>
    <name type="ordered locus">P9515_06721</name>
</gene>
<comment type="function">
    <text evidence="1">Catalyzes the thiamine diphosphate-dependent decarboxylation of 2-oxoglutarate and the subsequent addition of the resulting succinic semialdehyde-thiamine pyrophosphate anion to isochorismate to yield 2-succinyl-5-enolpyruvyl-6-hydroxy-3-cyclohexene-1-carboxylate (SEPHCHC).</text>
</comment>
<comment type="catalytic activity">
    <reaction evidence="1">
        <text>isochorismate + 2-oxoglutarate + H(+) = 5-enolpyruvoyl-6-hydroxy-2-succinyl-cyclohex-3-ene-1-carboxylate + CO2</text>
        <dbReference type="Rhea" id="RHEA:25593"/>
        <dbReference type="ChEBI" id="CHEBI:15378"/>
        <dbReference type="ChEBI" id="CHEBI:16526"/>
        <dbReference type="ChEBI" id="CHEBI:16810"/>
        <dbReference type="ChEBI" id="CHEBI:29780"/>
        <dbReference type="ChEBI" id="CHEBI:58818"/>
        <dbReference type="EC" id="2.2.1.9"/>
    </reaction>
</comment>
<comment type="cofactor">
    <cofactor evidence="1">
        <name>Mg(2+)</name>
        <dbReference type="ChEBI" id="CHEBI:18420"/>
    </cofactor>
    <cofactor evidence="1">
        <name>Mn(2+)</name>
        <dbReference type="ChEBI" id="CHEBI:29035"/>
    </cofactor>
</comment>
<comment type="cofactor">
    <cofactor evidence="1">
        <name>thiamine diphosphate</name>
        <dbReference type="ChEBI" id="CHEBI:58937"/>
    </cofactor>
    <text evidence="1">Binds 1 thiamine pyrophosphate per subunit.</text>
</comment>
<comment type="pathway">
    <text evidence="1">Quinol/quinone metabolism; 1,4-dihydroxy-2-naphthoate biosynthesis; 1,4-dihydroxy-2-naphthoate from chorismate: step 2/7.</text>
</comment>
<comment type="pathway">
    <text evidence="1">Cofactor biosynthesis; phylloquinone biosynthesis.</text>
</comment>
<comment type="subunit">
    <text evidence="1">Homodimer.</text>
</comment>
<comment type="similarity">
    <text evidence="1">Belongs to the TPP enzyme family. MenD subfamily.</text>
</comment>
<feature type="chain" id="PRO_0000341805" description="2-succinyl-5-enolpyruvyl-6-hydroxy-3-cyclohexene-1-carboxylate synthase">
    <location>
        <begin position="1"/>
        <end position="588"/>
    </location>
</feature>
<organism>
    <name type="scientific">Prochlorococcus marinus (strain MIT 9515)</name>
    <dbReference type="NCBI Taxonomy" id="167542"/>
    <lineage>
        <taxon>Bacteria</taxon>
        <taxon>Bacillati</taxon>
        <taxon>Cyanobacteriota</taxon>
        <taxon>Cyanophyceae</taxon>
        <taxon>Synechococcales</taxon>
        <taxon>Prochlorococcaceae</taxon>
        <taxon>Prochlorococcus</taxon>
    </lineage>
</organism>
<protein>
    <recommendedName>
        <fullName evidence="1">2-succinyl-5-enolpyruvyl-6-hydroxy-3-cyclohexene-1-carboxylate synthase</fullName>
        <shortName evidence="1">SEPHCHC synthase</shortName>
        <ecNumber evidence="1">2.2.1.9</ecNumber>
    </recommendedName>
</protein>
<sequence length="588" mass="65896">MTSSIECQNIFRSLQLLDLFIKIGVKNLILCPGSRSAPLAIAAGELYKYGILNVFNSIDERSAGFHSLGISTASGDISLVVTTSGSAVGNLLPAAVEADRSCKSIVFITADRPLRLKNCGSNQTVNQEAFLNSVCRSTLSTNLNGIHKNNDDDILKIVKMIKKQLLQSPGPIHLNIPFEKPLDISLKNKRKTLKVFETLYLNKTCKFLKQNEQNKSIHFSKRIFESLDLSNSGIIIVGPYQGSIKDLVSFNNSLEKIQSITGWPVFADPVSGVSADLRGLVENWELIIKKNNNVIKCNQILRLGPLSSSNNLEKFLSDFDGIQILVKENNRRKLDPIKKSLEYEFGLTNFVNQLLGTYSDDQKKKKPLINLVKVLRREGQKISKILNEQIFLNKEITEYKLANFVPKIWPENYPIMLSASSPIRDWLTFSENGTLTRKCFSFRGASGIDGTLSLALGIARITQPLLLVTGDLALIHDINGFLIENSIDLNLTVLLINNNGGNIFNNLYKNNLEKEELKKLFLMPKSINWENLAKAFQVPIKIVSDLNKLPESFEWSLSMQKSVIIKVDINVDNEMKERSLILKKILNN</sequence>
<keyword id="KW-0460">Magnesium</keyword>
<keyword id="KW-0464">Manganese</keyword>
<keyword id="KW-0479">Metal-binding</keyword>
<keyword id="KW-0786">Thiamine pyrophosphate</keyword>
<keyword id="KW-0808">Transferase</keyword>
<accession>A2BVS0</accession>
<evidence type="ECO:0000255" key="1">
    <source>
        <dbReference type="HAMAP-Rule" id="MF_01659"/>
    </source>
</evidence>
<dbReference type="EC" id="2.2.1.9" evidence="1"/>
<dbReference type="EMBL" id="CP000552">
    <property type="protein sequence ID" value="ABM71881.1"/>
    <property type="molecule type" value="Genomic_DNA"/>
</dbReference>
<dbReference type="RefSeq" id="WP_011819986.1">
    <property type="nucleotide sequence ID" value="NC_008817.1"/>
</dbReference>
<dbReference type="SMR" id="A2BVS0"/>
<dbReference type="STRING" id="167542.P9515_06721"/>
<dbReference type="GeneID" id="60202039"/>
<dbReference type="KEGG" id="pmc:P9515_06721"/>
<dbReference type="eggNOG" id="COG1165">
    <property type="taxonomic scope" value="Bacteria"/>
</dbReference>
<dbReference type="HOGENOM" id="CLU_006051_3_0_3"/>
<dbReference type="OrthoDB" id="9791859at2"/>
<dbReference type="UniPathway" id="UPA00995"/>
<dbReference type="UniPathway" id="UPA01057">
    <property type="reaction ID" value="UER00164"/>
</dbReference>
<dbReference type="Proteomes" id="UP000001589">
    <property type="component" value="Chromosome"/>
</dbReference>
<dbReference type="GO" id="GO:0070204">
    <property type="term" value="F:2-succinyl-5-enolpyruvyl-6-hydroxy-3-cyclohexene-1-carboxylic-acid synthase activity"/>
    <property type="evidence" value="ECO:0007669"/>
    <property type="project" value="UniProtKB-UniRule"/>
</dbReference>
<dbReference type="GO" id="GO:0000287">
    <property type="term" value="F:magnesium ion binding"/>
    <property type="evidence" value="ECO:0007669"/>
    <property type="project" value="UniProtKB-UniRule"/>
</dbReference>
<dbReference type="GO" id="GO:0030145">
    <property type="term" value="F:manganese ion binding"/>
    <property type="evidence" value="ECO:0007669"/>
    <property type="project" value="UniProtKB-UniRule"/>
</dbReference>
<dbReference type="GO" id="GO:0030976">
    <property type="term" value="F:thiamine pyrophosphate binding"/>
    <property type="evidence" value="ECO:0007669"/>
    <property type="project" value="UniProtKB-UniRule"/>
</dbReference>
<dbReference type="GO" id="GO:0009234">
    <property type="term" value="P:menaquinone biosynthetic process"/>
    <property type="evidence" value="ECO:0007669"/>
    <property type="project" value="InterPro"/>
</dbReference>
<dbReference type="GO" id="GO:0042372">
    <property type="term" value="P:phylloquinone biosynthetic process"/>
    <property type="evidence" value="ECO:0007669"/>
    <property type="project" value="UniProtKB-UniRule"/>
</dbReference>
<dbReference type="CDD" id="cd07037">
    <property type="entry name" value="TPP_PYR_MenD"/>
    <property type="match status" value="1"/>
</dbReference>
<dbReference type="CDD" id="cd02009">
    <property type="entry name" value="TPP_SHCHC_synthase"/>
    <property type="match status" value="1"/>
</dbReference>
<dbReference type="Gene3D" id="3.40.50.970">
    <property type="match status" value="2"/>
</dbReference>
<dbReference type="Gene3D" id="3.40.50.1220">
    <property type="entry name" value="TPP-binding domain"/>
    <property type="match status" value="1"/>
</dbReference>
<dbReference type="HAMAP" id="MF_01659">
    <property type="entry name" value="MenD"/>
    <property type="match status" value="1"/>
</dbReference>
<dbReference type="InterPro" id="IPR004433">
    <property type="entry name" value="MenaQ_synth_MenD"/>
</dbReference>
<dbReference type="InterPro" id="IPR029061">
    <property type="entry name" value="THDP-binding"/>
</dbReference>
<dbReference type="InterPro" id="IPR012001">
    <property type="entry name" value="Thiamin_PyroP_enz_TPP-bd_dom"/>
</dbReference>
<dbReference type="NCBIfam" id="TIGR00173">
    <property type="entry name" value="menD"/>
    <property type="match status" value="1"/>
</dbReference>
<dbReference type="PANTHER" id="PTHR42916">
    <property type="entry name" value="2-SUCCINYL-5-ENOLPYRUVYL-6-HYDROXY-3-CYCLOHEXENE-1-CARBOXYLATE SYNTHASE"/>
    <property type="match status" value="1"/>
</dbReference>
<dbReference type="PANTHER" id="PTHR42916:SF1">
    <property type="entry name" value="PROTEIN PHYLLO, CHLOROPLASTIC"/>
    <property type="match status" value="1"/>
</dbReference>
<dbReference type="Pfam" id="PF02776">
    <property type="entry name" value="TPP_enzyme_N"/>
    <property type="match status" value="1"/>
</dbReference>
<dbReference type="PIRSF" id="PIRSF004983">
    <property type="entry name" value="MenD"/>
    <property type="match status" value="1"/>
</dbReference>
<dbReference type="SUPFAM" id="SSF52518">
    <property type="entry name" value="Thiamin diphosphate-binding fold (THDP-binding)"/>
    <property type="match status" value="2"/>
</dbReference>
<reference key="1">
    <citation type="journal article" date="2007" name="PLoS Genet.">
        <title>Patterns and implications of gene gain and loss in the evolution of Prochlorococcus.</title>
        <authorList>
            <person name="Kettler G.C."/>
            <person name="Martiny A.C."/>
            <person name="Huang K."/>
            <person name="Zucker J."/>
            <person name="Coleman M.L."/>
            <person name="Rodrigue S."/>
            <person name="Chen F."/>
            <person name="Lapidus A."/>
            <person name="Ferriera S."/>
            <person name="Johnson J."/>
            <person name="Steglich C."/>
            <person name="Church G.M."/>
            <person name="Richardson P."/>
            <person name="Chisholm S.W."/>
        </authorList>
    </citation>
    <scope>NUCLEOTIDE SEQUENCE [LARGE SCALE GENOMIC DNA]</scope>
    <source>
        <strain>MIT 9515</strain>
    </source>
</reference>
<name>MEND_PROM5</name>